<protein>
    <recommendedName>
        <fullName evidence="5">Secreted RxLR effector protein 55</fullName>
    </recommendedName>
</protein>
<evidence type="ECO:0000255" key="1"/>
<evidence type="ECO:0000255" key="2">
    <source>
        <dbReference type="PROSITE-ProRule" id="PRU00498"/>
    </source>
</evidence>
<evidence type="ECO:0000256" key="3">
    <source>
        <dbReference type="SAM" id="MobiDB-lite"/>
    </source>
</evidence>
<evidence type="ECO:0000269" key="4">
    <source>
    </source>
</evidence>
<evidence type="ECO:0000303" key="5">
    <source>
    </source>
</evidence>
<evidence type="ECO:0000305" key="6"/>
<evidence type="ECO:0000305" key="7">
    <source>
    </source>
</evidence>
<accession>A0A182BSS3</accession>
<feature type="signal peptide" evidence="1">
    <location>
        <begin position="1"/>
        <end position="21"/>
    </location>
</feature>
<feature type="chain" id="PRO_5008116088" description="Secreted RxLR effector protein 55">
    <location>
        <begin position="22"/>
        <end position="125"/>
    </location>
</feature>
<feature type="transmembrane region" description="Helical" evidence="1">
    <location>
        <begin position="99"/>
        <end position="119"/>
    </location>
</feature>
<feature type="region of interest" description="Disordered" evidence="3">
    <location>
        <begin position="51"/>
        <end position="96"/>
    </location>
</feature>
<feature type="short sequence motif" description="RxLR" evidence="7">
    <location>
        <begin position="35"/>
        <end position="38"/>
    </location>
</feature>
<feature type="compositionally biased region" description="Low complexity" evidence="3">
    <location>
        <begin position="51"/>
        <end position="87"/>
    </location>
</feature>
<feature type="glycosylation site" description="N-linked (GlcNAc...) asparagine" evidence="2">
    <location>
        <position position="74"/>
    </location>
</feature>
<proteinExistence type="evidence at transcript level"/>
<dbReference type="EMBL" id="KX010962">
    <property type="protein sequence ID" value="ANC73382.1"/>
    <property type="molecule type" value="mRNA"/>
</dbReference>
<dbReference type="GlyCosmos" id="A0A182BSS3">
    <property type="glycosylation" value="1 site, No reported glycans"/>
</dbReference>
<dbReference type="GO" id="GO:0005576">
    <property type="term" value="C:extracellular region"/>
    <property type="evidence" value="ECO:0007669"/>
    <property type="project" value="UniProtKB-SubCell"/>
</dbReference>
<dbReference type="GO" id="GO:0020002">
    <property type="term" value="C:host cell plasma membrane"/>
    <property type="evidence" value="ECO:0007669"/>
    <property type="project" value="UniProtKB-SubCell"/>
</dbReference>
<dbReference type="GO" id="GO:0016020">
    <property type="term" value="C:membrane"/>
    <property type="evidence" value="ECO:0007669"/>
    <property type="project" value="UniProtKB-KW"/>
</dbReference>
<sequence>MAASRSSITTLLLLIVAVALGYGILPISAKTSVARQLREQVDFVDAAALSESATSSSSSSALDHKSSAPGEATNASETEHSAASTASEPKHEGPTMMSFVGPAAAGVLAILLIGAVIAFKKRMNK</sequence>
<name>RLR55_PLAVT</name>
<comment type="function">
    <text evidence="4">Effector that acts as a broad suppressor of cell death to interrupt plant immunity. Inhibits cell death induced by cell death-inducing proteins, including the PAMP elicitor INF1 from P.infestans.</text>
</comment>
<comment type="subcellular location">
    <subcellularLocation>
        <location evidence="4">Secreted</location>
    </subcellularLocation>
    <subcellularLocation>
        <location evidence="4">Host cell membrane</location>
        <topology evidence="1">Single-pass membrane protein</topology>
    </subcellularLocation>
</comment>
<comment type="induction">
    <text evidence="4">Expression is up-regulated at later stages of infection.</text>
</comment>
<comment type="domain">
    <text evidence="7">Has a conserved RxLR motif that acts to carry the protein into the host cell cytoplasm. Lacks the 'so-called' EER motif, which is found closely behind the RxLR motif in most of RxLR effector family members, but the presence of an EER motif is not always essential for the translocation of every RxLR effector into host cells, or for inducing a hypersensitive response.</text>
</comment>
<comment type="similarity">
    <text evidence="6">Belongs to the RxLR effector family.</text>
</comment>
<gene>
    <name evidence="5" type="primary">RxLR55</name>
</gene>
<reference key="1">
    <citation type="journal article" date="2016" name="Front. Microbiol.">
        <title>Studying the mechanism of Plasmopara viticola RxLR effectors on suppressing plant immunity.</title>
        <authorList>
            <person name="Xiang J."/>
            <person name="Li X."/>
            <person name="Wu J."/>
            <person name="Yin L."/>
            <person name="Zhang Y."/>
            <person name="Lu J."/>
        </authorList>
    </citation>
    <scope>NUCLEOTIDE SEQUENCE [MRNA]</scope>
    <scope>INDUCTION</scope>
    <scope>FUNCTION</scope>
    <scope>SUBCELLULAR LOCATION</scope>
    <scope>DOMAIN</scope>
    <source>
        <strain>ZJ-1-1</strain>
    </source>
</reference>
<organism>
    <name type="scientific">Plasmopara viticola</name>
    <name type="common">Downy mildew of grapevine</name>
    <name type="synonym">Botrytis viticola</name>
    <dbReference type="NCBI Taxonomy" id="143451"/>
    <lineage>
        <taxon>Eukaryota</taxon>
        <taxon>Sar</taxon>
        <taxon>Stramenopiles</taxon>
        <taxon>Oomycota</taxon>
        <taxon>Peronosporales</taxon>
        <taxon>Peronosporaceae</taxon>
        <taxon>Plasmopara</taxon>
    </lineage>
</organism>
<keyword id="KW-0325">Glycoprotein</keyword>
<keyword id="KW-1032">Host cell membrane</keyword>
<keyword id="KW-1043">Host membrane</keyword>
<keyword id="KW-0472">Membrane</keyword>
<keyword id="KW-0964">Secreted</keyword>
<keyword id="KW-0732">Signal</keyword>
<keyword id="KW-0812">Transmembrane</keyword>
<keyword id="KW-1133">Transmembrane helix</keyword>
<keyword id="KW-0843">Virulence</keyword>